<sequence length="843" mass="96650">MFGFLKNLLDDNARDIRRLQKTVDRINSMEPEWQRLSDADLQHKTVEFRQRLENGESLDDLLPEAFATVREASRRVLGMRHFDVQLIGGMVLHQGRIAEMRTGEGKTLVATLPSYLNALTGRGVHVVTVNDYLAKRDAEWMGRIHRFLGLQVGLIIHGLDFAERREAYAADITYGTNNEFGFDYLRDNMVIQPQHMVQRELHYAIVDEVDSILIDEARTPLIISGQANKPTEKYYAVARIIPRLTKDVDYKVDEKAHSVVLTEEGVSRVEKMLGIDNLADSLDWAHHVNQGLKAHALMRRDRDYVVKDGEVIIVDEFTGRLMFGRRYSEGLHQAIEAKEGLEIQNESQTLATITLQNYFRMYDKLSGMTGTAKTEEPEFMQIYKMDVVQIPTNKPMQRKDLPDVVYRTEEGKFNAVVEEIVQSFRRGQPVLVGTVSIEKSEQLSDKLKRRGVPHQVLNAKHHEKEAEIVKNAGQRGMVTIATNMAGRGTDIILGEGVAELGGLYVIGTERHEARRIDNQLRGRSGRQGDPGQTRFYVSLEDDLMRLFGAENIQGVMDRLGMDDSMPIESGMITRAIENAQRRVEARNFDIRKHVLQYDDVMNQQREVIYDQRKKVLNGENLRDTVFDFIDTLVENMVNRFAGEEKYVENWDLPAMLAYAEETFQIAVTAEDLHEMEKEEVIAFFQEKAQERYSQREQELGLETIRELERIILLRVVDSHWMDHLDAMDHLRHGIGLRAYGQKDPLVEYKYEAYSMFQEMIASVQEEFLRYMFRVNVVVAQAEEEKQEAEAEAEAETVLKNAVENRSDDSLPKQPVKAEPRVGRNDPCPCGSGKKYKKCCGVKG</sequence>
<keyword id="KW-0067">ATP-binding</keyword>
<keyword id="KW-1003">Cell membrane</keyword>
<keyword id="KW-0963">Cytoplasm</keyword>
<keyword id="KW-0472">Membrane</keyword>
<keyword id="KW-0479">Metal-binding</keyword>
<keyword id="KW-0547">Nucleotide-binding</keyword>
<keyword id="KW-0653">Protein transport</keyword>
<keyword id="KW-1185">Reference proteome</keyword>
<keyword id="KW-1278">Translocase</keyword>
<keyword id="KW-0811">Translocation</keyword>
<keyword id="KW-0813">Transport</keyword>
<keyword id="KW-0862">Zinc</keyword>
<gene>
    <name evidence="1" type="primary">secA</name>
    <name type="ordered locus">Helmi_06860</name>
    <name type="ORF">HM1_1266</name>
</gene>
<organism>
    <name type="scientific">Heliobacterium modesticaldum (strain ATCC 51547 / Ice1)</name>
    <dbReference type="NCBI Taxonomy" id="498761"/>
    <lineage>
        <taxon>Bacteria</taxon>
        <taxon>Bacillati</taxon>
        <taxon>Bacillota</taxon>
        <taxon>Clostridia</taxon>
        <taxon>Eubacteriales</taxon>
        <taxon>Heliobacteriaceae</taxon>
        <taxon>Heliomicrobium</taxon>
    </lineage>
</organism>
<accession>B0TGY6</accession>
<comment type="function">
    <text evidence="1">Part of the Sec protein translocase complex. Interacts with the SecYEG preprotein conducting channel. Has a central role in coupling the hydrolysis of ATP to the transfer of proteins into and across the cell membrane, serving as an ATP-driven molecular motor driving the stepwise translocation of polypeptide chains across the membrane.</text>
</comment>
<comment type="catalytic activity">
    <reaction evidence="1">
        <text>ATP + H2O + cellular proteinSide 1 = ADP + phosphate + cellular proteinSide 2.</text>
        <dbReference type="EC" id="7.4.2.8"/>
    </reaction>
</comment>
<comment type="cofactor">
    <cofactor evidence="1">
        <name>Zn(2+)</name>
        <dbReference type="ChEBI" id="CHEBI:29105"/>
    </cofactor>
    <text evidence="1">May bind 1 zinc ion per subunit.</text>
</comment>
<comment type="subunit">
    <text evidence="1">Monomer and homodimer. Part of the essential Sec protein translocation apparatus which comprises SecA, SecYEG and auxiliary proteins SecDF. Other proteins may also be involved.</text>
</comment>
<comment type="subcellular location">
    <subcellularLocation>
        <location evidence="1">Cell membrane</location>
        <topology evidence="1">Peripheral membrane protein</topology>
        <orientation evidence="1">Cytoplasmic side</orientation>
    </subcellularLocation>
    <subcellularLocation>
        <location evidence="1">Cytoplasm</location>
    </subcellularLocation>
    <text evidence="1">Distribution is 50-50.</text>
</comment>
<comment type="similarity">
    <text evidence="1">Belongs to the SecA family.</text>
</comment>
<feature type="chain" id="PRO_1000145020" description="Protein translocase subunit SecA">
    <location>
        <begin position="1"/>
        <end position="843"/>
    </location>
</feature>
<feature type="region of interest" description="Disordered" evidence="2">
    <location>
        <begin position="799"/>
        <end position="834"/>
    </location>
</feature>
<feature type="compositionally biased region" description="Basic and acidic residues" evidence="2">
    <location>
        <begin position="802"/>
        <end position="823"/>
    </location>
</feature>
<feature type="binding site" evidence="1">
    <location>
        <position position="85"/>
    </location>
    <ligand>
        <name>ATP</name>
        <dbReference type="ChEBI" id="CHEBI:30616"/>
    </ligand>
</feature>
<feature type="binding site" evidence="1">
    <location>
        <begin position="103"/>
        <end position="107"/>
    </location>
    <ligand>
        <name>ATP</name>
        <dbReference type="ChEBI" id="CHEBI:30616"/>
    </ligand>
</feature>
<feature type="binding site" evidence="1">
    <location>
        <position position="490"/>
    </location>
    <ligand>
        <name>ATP</name>
        <dbReference type="ChEBI" id="CHEBI:30616"/>
    </ligand>
</feature>
<feature type="binding site" evidence="1">
    <location>
        <position position="827"/>
    </location>
    <ligand>
        <name>Zn(2+)</name>
        <dbReference type="ChEBI" id="CHEBI:29105"/>
    </ligand>
</feature>
<feature type="binding site" evidence="1">
    <location>
        <position position="829"/>
    </location>
    <ligand>
        <name>Zn(2+)</name>
        <dbReference type="ChEBI" id="CHEBI:29105"/>
    </ligand>
</feature>
<feature type="binding site" evidence="1">
    <location>
        <position position="838"/>
    </location>
    <ligand>
        <name>Zn(2+)</name>
        <dbReference type="ChEBI" id="CHEBI:29105"/>
    </ligand>
</feature>
<feature type="binding site" evidence="1">
    <location>
        <position position="839"/>
    </location>
    <ligand>
        <name>Zn(2+)</name>
        <dbReference type="ChEBI" id="CHEBI:29105"/>
    </ligand>
</feature>
<proteinExistence type="inferred from homology"/>
<dbReference type="EC" id="7.4.2.8" evidence="1"/>
<dbReference type="EMBL" id="CP000930">
    <property type="protein sequence ID" value="ABZ83311.1"/>
    <property type="molecule type" value="Genomic_DNA"/>
</dbReference>
<dbReference type="SMR" id="B0TGY6"/>
<dbReference type="STRING" id="498761.HM1_1266"/>
<dbReference type="KEGG" id="hmo:HM1_1266"/>
<dbReference type="eggNOG" id="COG0653">
    <property type="taxonomic scope" value="Bacteria"/>
</dbReference>
<dbReference type="HOGENOM" id="CLU_005314_3_0_9"/>
<dbReference type="Proteomes" id="UP000008550">
    <property type="component" value="Chromosome"/>
</dbReference>
<dbReference type="GO" id="GO:0031522">
    <property type="term" value="C:cell envelope Sec protein transport complex"/>
    <property type="evidence" value="ECO:0007669"/>
    <property type="project" value="TreeGrafter"/>
</dbReference>
<dbReference type="GO" id="GO:0005829">
    <property type="term" value="C:cytosol"/>
    <property type="evidence" value="ECO:0007669"/>
    <property type="project" value="TreeGrafter"/>
</dbReference>
<dbReference type="GO" id="GO:0005886">
    <property type="term" value="C:plasma membrane"/>
    <property type="evidence" value="ECO:0007669"/>
    <property type="project" value="UniProtKB-SubCell"/>
</dbReference>
<dbReference type="GO" id="GO:0005524">
    <property type="term" value="F:ATP binding"/>
    <property type="evidence" value="ECO:0007669"/>
    <property type="project" value="UniProtKB-UniRule"/>
</dbReference>
<dbReference type="GO" id="GO:0046872">
    <property type="term" value="F:metal ion binding"/>
    <property type="evidence" value="ECO:0007669"/>
    <property type="project" value="UniProtKB-KW"/>
</dbReference>
<dbReference type="GO" id="GO:0008564">
    <property type="term" value="F:protein-exporting ATPase activity"/>
    <property type="evidence" value="ECO:0007669"/>
    <property type="project" value="UniProtKB-EC"/>
</dbReference>
<dbReference type="GO" id="GO:0065002">
    <property type="term" value="P:intracellular protein transmembrane transport"/>
    <property type="evidence" value="ECO:0007669"/>
    <property type="project" value="UniProtKB-UniRule"/>
</dbReference>
<dbReference type="GO" id="GO:0017038">
    <property type="term" value="P:protein import"/>
    <property type="evidence" value="ECO:0007669"/>
    <property type="project" value="InterPro"/>
</dbReference>
<dbReference type="GO" id="GO:0006605">
    <property type="term" value="P:protein targeting"/>
    <property type="evidence" value="ECO:0007669"/>
    <property type="project" value="UniProtKB-UniRule"/>
</dbReference>
<dbReference type="GO" id="GO:0043952">
    <property type="term" value="P:protein transport by the Sec complex"/>
    <property type="evidence" value="ECO:0007669"/>
    <property type="project" value="TreeGrafter"/>
</dbReference>
<dbReference type="CDD" id="cd17928">
    <property type="entry name" value="DEXDc_SecA"/>
    <property type="match status" value="1"/>
</dbReference>
<dbReference type="CDD" id="cd18803">
    <property type="entry name" value="SF2_C_secA"/>
    <property type="match status" value="1"/>
</dbReference>
<dbReference type="FunFam" id="3.90.1440.10:FF:000003">
    <property type="entry name" value="Preprotein translocase SecA subunit"/>
    <property type="match status" value="1"/>
</dbReference>
<dbReference type="FunFam" id="1.10.3060.10:FF:000002">
    <property type="entry name" value="Preprotein translocase subunit SecA"/>
    <property type="match status" value="1"/>
</dbReference>
<dbReference type="FunFam" id="3.40.50.300:FF:000246">
    <property type="entry name" value="Preprotein translocase subunit SecA"/>
    <property type="match status" value="1"/>
</dbReference>
<dbReference type="FunFam" id="3.40.50.300:FF:000429">
    <property type="entry name" value="Preprotein translocase subunit SecA"/>
    <property type="match status" value="1"/>
</dbReference>
<dbReference type="FunFam" id="3.40.50.300:FF:000334">
    <property type="entry name" value="Protein translocase subunit SecA"/>
    <property type="match status" value="1"/>
</dbReference>
<dbReference type="Gene3D" id="1.10.3060.10">
    <property type="entry name" value="Helical scaffold and wing domains of SecA"/>
    <property type="match status" value="1"/>
</dbReference>
<dbReference type="Gene3D" id="3.40.50.300">
    <property type="entry name" value="P-loop containing nucleotide triphosphate hydrolases"/>
    <property type="match status" value="3"/>
</dbReference>
<dbReference type="Gene3D" id="3.90.1440.10">
    <property type="entry name" value="SecA, preprotein cross-linking domain"/>
    <property type="match status" value="1"/>
</dbReference>
<dbReference type="HAMAP" id="MF_01382">
    <property type="entry name" value="SecA"/>
    <property type="match status" value="1"/>
</dbReference>
<dbReference type="InterPro" id="IPR014001">
    <property type="entry name" value="Helicase_ATP-bd"/>
</dbReference>
<dbReference type="InterPro" id="IPR001650">
    <property type="entry name" value="Helicase_C-like"/>
</dbReference>
<dbReference type="InterPro" id="IPR027417">
    <property type="entry name" value="P-loop_NTPase"/>
</dbReference>
<dbReference type="InterPro" id="IPR004027">
    <property type="entry name" value="SEC_C_motif"/>
</dbReference>
<dbReference type="InterPro" id="IPR000185">
    <property type="entry name" value="SecA"/>
</dbReference>
<dbReference type="InterPro" id="IPR020937">
    <property type="entry name" value="SecA_CS"/>
</dbReference>
<dbReference type="InterPro" id="IPR011115">
    <property type="entry name" value="SecA_DEAD"/>
</dbReference>
<dbReference type="InterPro" id="IPR014018">
    <property type="entry name" value="SecA_motor_DEAD"/>
</dbReference>
<dbReference type="InterPro" id="IPR011130">
    <property type="entry name" value="SecA_preprotein_X-link_dom"/>
</dbReference>
<dbReference type="InterPro" id="IPR044722">
    <property type="entry name" value="SecA_SF2_C"/>
</dbReference>
<dbReference type="InterPro" id="IPR011116">
    <property type="entry name" value="SecA_Wing/Scaffold"/>
</dbReference>
<dbReference type="InterPro" id="IPR036266">
    <property type="entry name" value="SecA_Wing/Scaffold_sf"/>
</dbReference>
<dbReference type="InterPro" id="IPR036670">
    <property type="entry name" value="SecA_X-link_sf"/>
</dbReference>
<dbReference type="NCBIfam" id="NF006630">
    <property type="entry name" value="PRK09200.1"/>
    <property type="match status" value="1"/>
</dbReference>
<dbReference type="NCBIfam" id="NF009538">
    <property type="entry name" value="PRK12904.1"/>
    <property type="match status" value="1"/>
</dbReference>
<dbReference type="NCBIfam" id="TIGR00963">
    <property type="entry name" value="secA"/>
    <property type="match status" value="1"/>
</dbReference>
<dbReference type="PANTHER" id="PTHR30612:SF0">
    <property type="entry name" value="CHLOROPLAST PROTEIN-TRANSPORTING ATPASE"/>
    <property type="match status" value="1"/>
</dbReference>
<dbReference type="PANTHER" id="PTHR30612">
    <property type="entry name" value="SECA INNER MEMBRANE COMPONENT OF SEC PROTEIN SECRETION SYSTEM"/>
    <property type="match status" value="1"/>
</dbReference>
<dbReference type="Pfam" id="PF21090">
    <property type="entry name" value="P-loop_SecA"/>
    <property type="match status" value="1"/>
</dbReference>
<dbReference type="Pfam" id="PF02810">
    <property type="entry name" value="SEC-C"/>
    <property type="match status" value="1"/>
</dbReference>
<dbReference type="Pfam" id="PF07517">
    <property type="entry name" value="SecA_DEAD"/>
    <property type="match status" value="1"/>
</dbReference>
<dbReference type="Pfam" id="PF01043">
    <property type="entry name" value="SecA_PP_bind"/>
    <property type="match status" value="1"/>
</dbReference>
<dbReference type="Pfam" id="PF07516">
    <property type="entry name" value="SecA_SW"/>
    <property type="match status" value="1"/>
</dbReference>
<dbReference type="PRINTS" id="PR00906">
    <property type="entry name" value="SECA"/>
</dbReference>
<dbReference type="SMART" id="SM00957">
    <property type="entry name" value="SecA_DEAD"/>
    <property type="match status" value="1"/>
</dbReference>
<dbReference type="SMART" id="SM00958">
    <property type="entry name" value="SecA_PP_bind"/>
    <property type="match status" value="1"/>
</dbReference>
<dbReference type="SUPFAM" id="SSF81886">
    <property type="entry name" value="Helical scaffold and wing domains of SecA"/>
    <property type="match status" value="1"/>
</dbReference>
<dbReference type="SUPFAM" id="SSF52540">
    <property type="entry name" value="P-loop containing nucleoside triphosphate hydrolases"/>
    <property type="match status" value="2"/>
</dbReference>
<dbReference type="SUPFAM" id="SSF81767">
    <property type="entry name" value="Pre-protein crosslinking domain of SecA"/>
    <property type="match status" value="1"/>
</dbReference>
<dbReference type="PROSITE" id="PS01312">
    <property type="entry name" value="SECA"/>
    <property type="match status" value="1"/>
</dbReference>
<dbReference type="PROSITE" id="PS51196">
    <property type="entry name" value="SECA_MOTOR_DEAD"/>
    <property type="match status" value="1"/>
</dbReference>
<reference key="1">
    <citation type="journal article" date="2008" name="J. Bacteriol.">
        <title>The genome of Heliobacterium modesticaldum, a phototrophic representative of the Firmicutes containing the simplest photosynthetic apparatus.</title>
        <authorList>
            <person name="Sattley W.M."/>
            <person name="Madigan M.T."/>
            <person name="Swingley W.D."/>
            <person name="Cheung P.C."/>
            <person name="Clocksin K.M."/>
            <person name="Conrad A.L."/>
            <person name="Dejesa L.C."/>
            <person name="Honchak B.M."/>
            <person name="Jung D.O."/>
            <person name="Karbach L.E."/>
            <person name="Kurdoglu A."/>
            <person name="Lahiri S."/>
            <person name="Mastrian S.D."/>
            <person name="Page L.E."/>
            <person name="Taylor H.L."/>
            <person name="Wang Z.T."/>
            <person name="Raymond J."/>
            <person name="Chen M."/>
            <person name="Blankenship R.E."/>
            <person name="Touchman J.W."/>
        </authorList>
    </citation>
    <scope>NUCLEOTIDE SEQUENCE [LARGE SCALE GENOMIC DNA]</scope>
    <source>
        <strain>ATCC 51547 / Ice1</strain>
    </source>
</reference>
<protein>
    <recommendedName>
        <fullName evidence="1">Protein translocase subunit SecA</fullName>
        <ecNumber evidence="1">7.4.2.8</ecNumber>
    </recommendedName>
</protein>
<name>SECA_HELMI</name>
<evidence type="ECO:0000255" key="1">
    <source>
        <dbReference type="HAMAP-Rule" id="MF_01382"/>
    </source>
</evidence>
<evidence type="ECO:0000256" key="2">
    <source>
        <dbReference type="SAM" id="MobiDB-lite"/>
    </source>
</evidence>